<gene>
    <name type="primary">ddx5</name>
    <name type="ORF">DDB_G0293036</name>
</gene>
<organism>
    <name type="scientific">Dictyostelium discoideum</name>
    <name type="common">Social amoeba</name>
    <dbReference type="NCBI Taxonomy" id="44689"/>
    <lineage>
        <taxon>Eukaryota</taxon>
        <taxon>Amoebozoa</taxon>
        <taxon>Evosea</taxon>
        <taxon>Eumycetozoa</taxon>
        <taxon>Dictyostelia</taxon>
        <taxon>Dictyosteliales</taxon>
        <taxon>Dictyosteliaceae</taxon>
        <taxon>Dictyostelium</taxon>
    </lineage>
</organism>
<accession>Q54CD6</accession>
<feature type="chain" id="PRO_0000327410" description="Probable ATP-dependent RNA helicase ddx5">
    <location>
        <begin position="1"/>
        <end position="697"/>
    </location>
</feature>
<feature type="domain" description="Helicase ATP-binding" evidence="2">
    <location>
        <begin position="237"/>
        <end position="425"/>
    </location>
</feature>
<feature type="domain" description="Helicase C-terminal" evidence="3">
    <location>
        <begin position="450"/>
        <end position="603"/>
    </location>
</feature>
<feature type="region of interest" description="Disordered" evidence="4">
    <location>
        <begin position="137"/>
        <end position="190"/>
    </location>
</feature>
<feature type="region of interest" description="Disordered" evidence="4">
    <location>
        <begin position="665"/>
        <end position="697"/>
    </location>
</feature>
<feature type="short sequence motif" description="Q motif" evidence="1">
    <location>
        <begin position="189"/>
        <end position="234"/>
    </location>
</feature>
<feature type="short sequence motif" description="DEAD box">
    <location>
        <begin position="373"/>
        <end position="376"/>
    </location>
</feature>
<feature type="compositionally biased region" description="Acidic residues" evidence="4">
    <location>
        <begin position="140"/>
        <end position="151"/>
    </location>
</feature>
<feature type="compositionally biased region" description="Basic and acidic residues" evidence="4">
    <location>
        <begin position="152"/>
        <end position="190"/>
    </location>
</feature>
<feature type="binding site" evidence="2">
    <location>
        <begin position="226"/>
        <end position="228"/>
    </location>
    <ligand>
        <name>ATP</name>
        <dbReference type="ChEBI" id="CHEBI:30616"/>
    </ligand>
</feature>
<feature type="binding site" evidence="1">
    <location>
        <position position="233"/>
    </location>
    <ligand>
        <name>ATP</name>
        <dbReference type="ChEBI" id="CHEBI:30616"/>
    </ligand>
</feature>
<feature type="binding site" evidence="2">
    <location>
        <begin position="250"/>
        <end position="257"/>
    </location>
    <ligand>
        <name>ATP</name>
        <dbReference type="ChEBI" id="CHEBI:30616"/>
    </ligand>
</feature>
<evidence type="ECO:0000250" key="1"/>
<evidence type="ECO:0000255" key="2">
    <source>
        <dbReference type="PROSITE-ProRule" id="PRU00541"/>
    </source>
</evidence>
<evidence type="ECO:0000255" key="3">
    <source>
        <dbReference type="PROSITE-ProRule" id="PRU00542"/>
    </source>
</evidence>
<evidence type="ECO:0000256" key="4">
    <source>
        <dbReference type="SAM" id="MobiDB-lite"/>
    </source>
</evidence>
<evidence type="ECO:0000305" key="5"/>
<keyword id="KW-0067">ATP-binding</keyword>
<keyword id="KW-0963">Cytoplasm</keyword>
<keyword id="KW-0347">Helicase</keyword>
<keyword id="KW-0378">Hydrolase</keyword>
<keyword id="KW-0866">Nonsense-mediated mRNA decay</keyword>
<keyword id="KW-0547">Nucleotide-binding</keyword>
<keyword id="KW-0539">Nucleus</keyword>
<keyword id="KW-1185">Reference proteome</keyword>
<keyword id="KW-0690">Ribosome biogenesis</keyword>
<keyword id="KW-0694">RNA-binding</keyword>
<keyword id="KW-0698">rRNA processing</keyword>
<dbReference type="EC" id="3.6.4.13"/>
<dbReference type="EMBL" id="AAFI02000199">
    <property type="protein sequence ID" value="EAL60870.1"/>
    <property type="molecule type" value="Genomic_DNA"/>
</dbReference>
<dbReference type="RefSeq" id="XP_629283.1">
    <property type="nucleotide sequence ID" value="XM_629281.1"/>
</dbReference>
<dbReference type="SMR" id="Q54CD6"/>
<dbReference type="STRING" id="44689.Q54CD6"/>
<dbReference type="PaxDb" id="44689-DDB0266367"/>
<dbReference type="EnsemblProtists" id="EAL60870">
    <property type="protein sequence ID" value="EAL60870"/>
    <property type="gene ID" value="DDB_G0293036"/>
</dbReference>
<dbReference type="GeneID" id="8629006"/>
<dbReference type="KEGG" id="ddi:DDB_G0293036"/>
<dbReference type="dictyBase" id="DDB_G0293036">
    <property type="gene designation" value="ddx5"/>
</dbReference>
<dbReference type="VEuPathDB" id="AmoebaDB:DDB_G0293036"/>
<dbReference type="eggNOG" id="KOG0331">
    <property type="taxonomic scope" value="Eukaryota"/>
</dbReference>
<dbReference type="HOGENOM" id="CLU_003041_1_3_1"/>
<dbReference type="InParanoid" id="Q54CD6"/>
<dbReference type="OMA" id="YLAPMIP"/>
<dbReference type="PhylomeDB" id="Q54CD6"/>
<dbReference type="PRO" id="PR:Q54CD6"/>
<dbReference type="Proteomes" id="UP000002195">
    <property type="component" value="Chromosome 6"/>
</dbReference>
<dbReference type="GO" id="GO:0005737">
    <property type="term" value="C:cytoplasm"/>
    <property type="evidence" value="ECO:0007669"/>
    <property type="project" value="UniProtKB-SubCell"/>
</dbReference>
<dbReference type="GO" id="GO:0005634">
    <property type="term" value="C:nucleus"/>
    <property type="evidence" value="ECO:0007669"/>
    <property type="project" value="UniProtKB-SubCell"/>
</dbReference>
<dbReference type="GO" id="GO:0005524">
    <property type="term" value="F:ATP binding"/>
    <property type="evidence" value="ECO:0007669"/>
    <property type="project" value="UniProtKB-KW"/>
</dbReference>
<dbReference type="GO" id="GO:0016887">
    <property type="term" value="F:ATP hydrolysis activity"/>
    <property type="evidence" value="ECO:0007669"/>
    <property type="project" value="RHEA"/>
</dbReference>
<dbReference type="GO" id="GO:0003729">
    <property type="term" value="F:mRNA binding"/>
    <property type="evidence" value="ECO:0000318"/>
    <property type="project" value="GO_Central"/>
</dbReference>
<dbReference type="GO" id="GO:0003724">
    <property type="term" value="F:RNA helicase activity"/>
    <property type="evidence" value="ECO:0000318"/>
    <property type="project" value="GO_Central"/>
</dbReference>
<dbReference type="GO" id="GO:0000184">
    <property type="term" value="P:nuclear-transcribed mRNA catabolic process, nonsense-mediated decay"/>
    <property type="evidence" value="ECO:0007669"/>
    <property type="project" value="UniProtKB-KW"/>
</dbReference>
<dbReference type="GO" id="GO:0006364">
    <property type="term" value="P:rRNA processing"/>
    <property type="evidence" value="ECO:0007669"/>
    <property type="project" value="UniProtKB-KW"/>
</dbReference>
<dbReference type="CDD" id="cd00268">
    <property type="entry name" value="DEADc"/>
    <property type="match status" value="1"/>
</dbReference>
<dbReference type="CDD" id="cd18787">
    <property type="entry name" value="SF2_C_DEAD"/>
    <property type="match status" value="1"/>
</dbReference>
<dbReference type="Gene3D" id="3.40.50.300">
    <property type="entry name" value="P-loop containing nucleotide triphosphate hydrolases"/>
    <property type="match status" value="2"/>
</dbReference>
<dbReference type="InterPro" id="IPR011545">
    <property type="entry name" value="DEAD/DEAH_box_helicase_dom"/>
</dbReference>
<dbReference type="InterPro" id="IPR050079">
    <property type="entry name" value="DEAD_box_RNA_helicase"/>
</dbReference>
<dbReference type="InterPro" id="IPR014001">
    <property type="entry name" value="Helicase_ATP-bd"/>
</dbReference>
<dbReference type="InterPro" id="IPR001650">
    <property type="entry name" value="Helicase_C-like"/>
</dbReference>
<dbReference type="InterPro" id="IPR027417">
    <property type="entry name" value="P-loop_NTPase"/>
</dbReference>
<dbReference type="InterPro" id="IPR000629">
    <property type="entry name" value="RNA-helicase_DEAD-box_CS"/>
</dbReference>
<dbReference type="PANTHER" id="PTHR47959:SF1">
    <property type="entry name" value="ATP-DEPENDENT RNA HELICASE DBPA"/>
    <property type="match status" value="1"/>
</dbReference>
<dbReference type="PANTHER" id="PTHR47959">
    <property type="entry name" value="ATP-DEPENDENT RNA HELICASE RHLE-RELATED"/>
    <property type="match status" value="1"/>
</dbReference>
<dbReference type="Pfam" id="PF00270">
    <property type="entry name" value="DEAD"/>
    <property type="match status" value="1"/>
</dbReference>
<dbReference type="Pfam" id="PF00271">
    <property type="entry name" value="Helicase_C"/>
    <property type="match status" value="1"/>
</dbReference>
<dbReference type="SMART" id="SM00487">
    <property type="entry name" value="DEXDc"/>
    <property type="match status" value="1"/>
</dbReference>
<dbReference type="SMART" id="SM00490">
    <property type="entry name" value="HELICc"/>
    <property type="match status" value="1"/>
</dbReference>
<dbReference type="SUPFAM" id="SSF52540">
    <property type="entry name" value="P-loop containing nucleoside triphosphate hydrolases"/>
    <property type="match status" value="1"/>
</dbReference>
<dbReference type="PROSITE" id="PS00039">
    <property type="entry name" value="DEAD_ATP_HELICASE"/>
    <property type="match status" value="1"/>
</dbReference>
<dbReference type="PROSITE" id="PS51192">
    <property type="entry name" value="HELICASE_ATP_BIND_1"/>
    <property type="match status" value="1"/>
</dbReference>
<dbReference type="PROSITE" id="PS51194">
    <property type="entry name" value="HELICASE_CTER"/>
    <property type="match status" value="1"/>
</dbReference>
<name>DDX5_DICDI</name>
<protein>
    <recommendedName>
        <fullName>Probable ATP-dependent RNA helicase ddx5</fullName>
        <ecNumber>3.6.4.13</ecNumber>
    </recommendedName>
    <alternativeName>
        <fullName>DEAD box protein 5</fullName>
    </alternativeName>
</protein>
<comment type="function">
    <text evidence="1">Probable ATP-dependent RNA helicase.</text>
</comment>
<comment type="catalytic activity">
    <reaction>
        <text>ATP + H2O = ADP + phosphate + H(+)</text>
        <dbReference type="Rhea" id="RHEA:13065"/>
        <dbReference type="ChEBI" id="CHEBI:15377"/>
        <dbReference type="ChEBI" id="CHEBI:15378"/>
        <dbReference type="ChEBI" id="CHEBI:30616"/>
        <dbReference type="ChEBI" id="CHEBI:43474"/>
        <dbReference type="ChEBI" id="CHEBI:456216"/>
        <dbReference type="EC" id="3.6.4.13"/>
    </reaction>
</comment>
<comment type="subcellular location">
    <subcellularLocation>
        <location evidence="1">Cytoplasm</location>
    </subcellularLocation>
    <subcellularLocation>
        <location evidence="1">Nucleus</location>
    </subcellularLocation>
</comment>
<comment type="domain">
    <text>The Q motif is unique to and characteristic of the DEAD box family of RNA helicases and controls ATP binding and hydrolysis.</text>
</comment>
<comment type="similarity">
    <text evidence="5">Belongs to the DEAD box helicase family. DDX5/DBP2 subfamily.</text>
</comment>
<reference key="1">
    <citation type="journal article" date="2005" name="Nature">
        <title>The genome of the social amoeba Dictyostelium discoideum.</title>
        <authorList>
            <person name="Eichinger L."/>
            <person name="Pachebat J.A."/>
            <person name="Gloeckner G."/>
            <person name="Rajandream M.A."/>
            <person name="Sucgang R."/>
            <person name="Berriman M."/>
            <person name="Song J."/>
            <person name="Olsen R."/>
            <person name="Szafranski K."/>
            <person name="Xu Q."/>
            <person name="Tunggal B."/>
            <person name="Kummerfeld S."/>
            <person name="Madera M."/>
            <person name="Konfortov B.A."/>
            <person name="Rivero F."/>
            <person name="Bankier A.T."/>
            <person name="Lehmann R."/>
            <person name="Hamlin N."/>
            <person name="Davies R."/>
            <person name="Gaudet P."/>
            <person name="Fey P."/>
            <person name="Pilcher K."/>
            <person name="Chen G."/>
            <person name="Saunders D."/>
            <person name="Sodergren E.J."/>
            <person name="Davis P."/>
            <person name="Kerhornou A."/>
            <person name="Nie X."/>
            <person name="Hall N."/>
            <person name="Anjard C."/>
            <person name="Hemphill L."/>
            <person name="Bason N."/>
            <person name="Farbrother P."/>
            <person name="Desany B."/>
            <person name="Just E."/>
            <person name="Morio T."/>
            <person name="Rost R."/>
            <person name="Churcher C.M."/>
            <person name="Cooper J."/>
            <person name="Haydock S."/>
            <person name="van Driessche N."/>
            <person name="Cronin A."/>
            <person name="Goodhead I."/>
            <person name="Muzny D.M."/>
            <person name="Mourier T."/>
            <person name="Pain A."/>
            <person name="Lu M."/>
            <person name="Harper D."/>
            <person name="Lindsay R."/>
            <person name="Hauser H."/>
            <person name="James K.D."/>
            <person name="Quiles M."/>
            <person name="Madan Babu M."/>
            <person name="Saito T."/>
            <person name="Buchrieser C."/>
            <person name="Wardroper A."/>
            <person name="Felder M."/>
            <person name="Thangavelu M."/>
            <person name="Johnson D."/>
            <person name="Knights A."/>
            <person name="Loulseged H."/>
            <person name="Mungall K.L."/>
            <person name="Oliver K."/>
            <person name="Price C."/>
            <person name="Quail M.A."/>
            <person name="Urushihara H."/>
            <person name="Hernandez J."/>
            <person name="Rabbinowitsch E."/>
            <person name="Steffen D."/>
            <person name="Sanders M."/>
            <person name="Ma J."/>
            <person name="Kohara Y."/>
            <person name="Sharp S."/>
            <person name="Simmonds M.N."/>
            <person name="Spiegler S."/>
            <person name="Tivey A."/>
            <person name="Sugano S."/>
            <person name="White B."/>
            <person name="Walker D."/>
            <person name="Woodward J.R."/>
            <person name="Winckler T."/>
            <person name="Tanaka Y."/>
            <person name="Shaulsky G."/>
            <person name="Schleicher M."/>
            <person name="Weinstock G.M."/>
            <person name="Rosenthal A."/>
            <person name="Cox E.C."/>
            <person name="Chisholm R.L."/>
            <person name="Gibbs R.A."/>
            <person name="Loomis W.F."/>
            <person name="Platzer M."/>
            <person name="Kay R.R."/>
            <person name="Williams J.G."/>
            <person name="Dear P.H."/>
            <person name="Noegel A.A."/>
            <person name="Barrell B.G."/>
            <person name="Kuspa A."/>
        </authorList>
    </citation>
    <scope>NUCLEOTIDE SEQUENCE [LARGE SCALE GENOMIC DNA]</scope>
    <source>
        <strain>AX4</strain>
    </source>
</reference>
<sequence length="697" mass="80799">MNKYKNKYNTDNKFNNSKYIKNNQVELSKQELEDEEILKINDDEFNEGLNKQALFQQDDYVYKFKKQQKEEKIGGDEKTQIDNEKPEDFNITLKSIDFKSINLPSFKKRFLQSSTIKDIDSFEFINSTTEFIIENKSDDDNYYDDDDDDEGDKNKEKEKEKEKEKEKEKEKEKEKEKEKEKEKEKEKNKEIENKTYPNNCKIPIANTGESECLPNTLKLFFKKTQFPTPTLFQQYAWPAILTGHDIIGTSLPGSGKTLGYLAPMIPHCLARVDRGGKNKITGEKAPKQYTGILVLVLVPTRELGLQVHSNTLIITQLFGIKTSVIYGGISKNLQIEQLEKEKPQILISTPGRLIEMIENGHVDLSSVTMLVLDEADKMLSKGLIPQLKQIRGQIRPDSQNILFSATFPDSLKEVSKDWIKDPSIRLRIGSSELPKLNHIQQDAQLIAHHKKPRALIKLLSEPQFKEKKKTIVFFNKIKELKRISIMLLKSNIKHDTIFGNIDQELREKLINKFSSSRSTLLLSTDIIGRGIHIDDIFNIINYDFPRSLEQYCHRVGRAGRSDKVVNPKAFSFLTNSDSYLVEPFVQFLKDQHQNISIPFLKLCNENFGTKFEFTLSKRKQKKLAQKDDVEKDDEAYLAKYEKLIKKDRKKDSDDECKKFKSFKRKNIDSDSDNDSDSNSDNGKETKSKDKNKKFKKY</sequence>
<proteinExistence type="inferred from homology"/>